<keyword id="KW-1185">Reference proteome</keyword>
<keyword id="KW-0687">Ribonucleoprotein</keyword>
<keyword id="KW-0689">Ribosomal protein</keyword>
<keyword id="KW-0694">RNA-binding</keyword>
<keyword id="KW-0699">rRNA-binding</keyword>
<sequence>MYAIIETGGKQLCVREGDTVRVEKLAVEDGAEVVFDRVLLVSTEEGLKIGRPLVLGARVTGRVQKQGRARKIIVFKYKAKKNYRRKQGHRQPYTQVVIEKIEL</sequence>
<reference key="1">
    <citation type="submission" date="2007-10" db="EMBL/GenBank/DDBJ databases">
        <title>Complete sequence of chromosome of Desulforudis audaxviator MP104C.</title>
        <authorList>
            <person name="Copeland A."/>
            <person name="Lucas S."/>
            <person name="Lapidus A."/>
            <person name="Barry K."/>
            <person name="Glavina del Rio T."/>
            <person name="Dalin E."/>
            <person name="Tice H."/>
            <person name="Bruce D."/>
            <person name="Pitluck S."/>
            <person name="Lowry S.R."/>
            <person name="Larimer F."/>
            <person name="Land M.L."/>
            <person name="Hauser L."/>
            <person name="Kyrpides N."/>
            <person name="Ivanova N.N."/>
            <person name="Richardson P."/>
        </authorList>
    </citation>
    <scope>NUCLEOTIDE SEQUENCE [LARGE SCALE GENOMIC DNA]</scope>
    <source>
        <strain>MP104C</strain>
    </source>
</reference>
<name>RL21_DESAP</name>
<feature type="chain" id="PRO_1000143783" description="Large ribosomal subunit protein bL21">
    <location>
        <begin position="1"/>
        <end position="103"/>
    </location>
</feature>
<proteinExistence type="inferred from homology"/>
<dbReference type="EMBL" id="CP000860">
    <property type="protein sequence ID" value="ACA59958.1"/>
    <property type="molecule type" value="Genomic_DNA"/>
</dbReference>
<dbReference type="RefSeq" id="WP_012302543.1">
    <property type="nucleotide sequence ID" value="NC_010424.1"/>
</dbReference>
<dbReference type="SMR" id="B1I4P8"/>
<dbReference type="STRING" id="477974.Daud_1452"/>
<dbReference type="KEGG" id="dau:Daud_1452"/>
<dbReference type="eggNOG" id="COG0261">
    <property type="taxonomic scope" value="Bacteria"/>
</dbReference>
<dbReference type="HOGENOM" id="CLU_061463_3_2_9"/>
<dbReference type="OrthoDB" id="9813334at2"/>
<dbReference type="Proteomes" id="UP000008544">
    <property type="component" value="Chromosome"/>
</dbReference>
<dbReference type="GO" id="GO:0005737">
    <property type="term" value="C:cytoplasm"/>
    <property type="evidence" value="ECO:0007669"/>
    <property type="project" value="UniProtKB-ARBA"/>
</dbReference>
<dbReference type="GO" id="GO:1990904">
    <property type="term" value="C:ribonucleoprotein complex"/>
    <property type="evidence" value="ECO:0007669"/>
    <property type="project" value="UniProtKB-KW"/>
</dbReference>
<dbReference type="GO" id="GO:0005840">
    <property type="term" value="C:ribosome"/>
    <property type="evidence" value="ECO:0007669"/>
    <property type="project" value="UniProtKB-KW"/>
</dbReference>
<dbReference type="GO" id="GO:0019843">
    <property type="term" value="F:rRNA binding"/>
    <property type="evidence" value="ECO:0007669"/>
    <property type="project" value="UniProtKB-UniRule"/>
</dbReference>
<dbReference type="GO" id="GO:0003735">
    <property type="term" value="F:structural constituent of ribosome"/>
    <property type="evidence" value="ECO:0007669"/>
    <property type="project" value="InterPro"/>
</dbReference>
<dbReference type="GO" id="GO:0006412">
    <property type="term" value="P:translation"/>
    <property type="evidence" value="ECO:0007669"/>
    <property type="project" value="UniProtKB-UniRule"/>
</dbReference>
<dbReference type="HAMAP" id="MF_01363">
    <property type="entry name" value="Ribosomal_bL21"/>
    <property type="match status" value="1"/>
</dbReference>
<dbReference type="InterPro" id="IPR028909">
    <property type="entry name" value="bL21-like"/>
</dbReference>
<dbReference type="InterPro" id="IPR036164">
    <property type="entry name" value="bL21-like_sf"/>
</dbReference>
<dbReference type="InterPro" id="IPR001787">
    <property type="entry name" value="Ribosomal_bL21"/>
</dbReference>
<dbReference type="InterPro" id="IPR018258">
    <property type="entry name" value="Ribosomal_bL21_CS"/>
</dbReference>
<dbReference type="NCBIfam" id="TIGR00061">
    <property type="entry name" value="L21"/>
    <property type="match status" value="1"/>
</dbReference>
<dbReference type="PANTHER" id="PTHR21349">
    <property type="entry name" value="50S RIBOSOMAL PROTEIN L21"/>
    <property type="match status" value="1"/>
</dbReference>
<dbReference type="PANTHER" id="PTHR21349:SF0">
    <property type="entry name" value="LARGE RIBOSOMAL SUBUNIT PROTEIN BL21M"/>
    <property type="match status" value="1"/>
</dbReference>
<dbReference type="Pfam" id="PF00829">
    <property type="entry name" value="Ribosomal_L21p"/>
    <property type="match status" value="1"/>
</dbReference>
<dbReference type="SUPFAM" id="SSF141091">
    <property type="entry name" value="L21p-like"/>
    <property type="match status" value="1"/>
</dbReference>
<dbReference type="PROSITE" id="PS01169">
    <property type="entry name" value="RIBOSOMAL_L21"/>
    <property type="match status" value="1"/>
</dbReference>
<evidence type="ECO:0000255" key="1">
    <source>
        <dbReference type="HAMAP-Rule" id="MF_01363"/>
    </source>
</evidence>
<evidence type="ECO:0000305" key="2"/>
<protein>
    <recommendedName>
        <fullName evidence="1">Large ribosomal subunit protein bL21</fullName>
    </recommendedName>
    <alternativeName>
        <fullName evidence="2">50S ribosomal protein L21</fullName>
    </alternativeName>
</protein>
<accession>B1I4P8</accession>
<organism>
    <name type="scientific">Desulforudis audaxviator (strain MP104C)</name>
    <dbReference type="NCBI Taxonomy" id="477974"/>
    <lineage>
        <taxon>Bacteria</taxon>
        <taxon>Bacillati</taxon>
        <taxon>Bacillota</taxon>
        <taxon>Clostridia</taxon>
        <taxon>Thermoanaerobacterales</taxon>
        <taxon>Candidatus Desulforudaceae</taxon>
        <taxon>Candidatus Desulforudis</taxon>
    </lineage>
</organism>
<gene>
    <name evidence="1" type="primary">rplU</name>
    <name type="ordered locus">Daud_1452</name>
</gene>
<comment type="function">
    <text evidence="1">This protein binds to 23S rRNA in the presence of protein L20.</text>
</comment>
<comment type="subunit">
    <text evidence="1">Part of the 50S ribosomal subunit. Contacts protein L20.</text>
</comment>
<comment type="similarity">
    <text evidence="1">Belongs to the bacterial ribosomal protein bL21 family.</text>
</comment>